<sequence>MSVVGTPKSAEQIQQEWDTNPRWKDVTRTYSAEDVVALQGSVVEEHTLARRGAEVLWEQLHDLEWVNALGALTGNMAVQQVRAGLKAIYLSGWQVAGDANLSGHTYPDQSLYPANSVPQVVRRINNALQRADQIAKIEGDTSVENWLAPIVADGEAGFGGALNVYELQKALIAAGVAGSHWEDQLASEKKCGHLGGKVLIPTQQHIRTLTSARLAADVADVPTVVIARTDAEAATLITSDVDERDQPFITGERTREGFYRTKNGIEPCIARAKAYAPFADLIWMETGTPDLEAARQFSEAVKAEYPDQMLAYNCSPSFNWKKHLDDATIAKFQKELAAMGFKFQFITLAGFHALNYSMFDLAYGYAQNQMSAYVELQEREFAAEERGYTATKHQREVGAGYFDRIATTVDPNSSTTALTGSTEEGQFH</sequence>
<keyword id="KW-0329">Glyoxylate bypass</keyword>
<keyword id="KW-0456">Lyase</keyword>
<keyword id="KW-0460">Magnesium</keyword>
<keyword id="KW-0479">Metal-binding</keyword>
<keyword id="KW-0816">Tricarboxylic acid cycle</keyword>
<name>ACEA1_MYCTE</name>
<dbReference type="EC" id="4.1.3.1" evidence="2"/>
<dbReference type="EC" id="4.1.3.30" evidence="2"/>
<dbReference type="EMBL" id="AP012340">
    <property type="protein sequence ID" value="BAL64328.1"/>
    <property type="molecule type" value="Genomic_DNA"/>
</dbReference>
<dbReference type="EMBL" id="JLBG01000002">
    <property type="protein sequence ID" value="KBK18542.1"/>
    <property type="molecule type" value="Genomic_DNA"/>
</dbReference>
<dbReference type="SMR" id="H8EVV4"/>
<dbReference type="ABCD" id="H8EVV4">
    <property type="antibodies" value="1 sequenced antibody"/>
</dbReference>
<dbReference type="KEGG" id="mtn:ERDMAN_0512"/>
<dbReference type="PATRIC" id="fig|652616.3.peg.519"/>
<dbReference type="HOGENOM" id="CLU_019214_2_0_11"/>
<dbReference type="UniPathway" id="UPA00703">
    <property type="reaction ID" value="UER00719"/>
</dbReference>
<dbReference type="GO" id="GO:0004451">
    <property type="term" value="F:isocitrate lyase activity"/>
    <property type="evidence" value="ECO:0007669"/>
    <property type="project" value="UniProtKB-EC"/>
</dbReference>
<dbReference type="GO" id="GO:0046872">
    <property type="term" value="F:metal ion binding"/>
    <property type="evidence" value="ECO:0007669"/>
    <property type="project" value="UniProtKB-KW"/>
</dbReference>
<dbReference type="GO" id="GO:0046421">
    <property type="term" value="F:methylisocitrate lyase activity"/>
    <property type="evidence" value="ECO:0007669"/>
    <property type="project" value="UniProtKB-EC"/>
</dbReference>
<dbReference type="GO" id="GO:0006097">
    <property type="term" value="P:glyoxylate cycle"/>
    <property type="evidence" value="ECO:0007669"/>
    <property type="project" value="UniProtKB-UniPathway"/>
</dbReference>
<dbReference type="GO" id="GO:0006099">
    <property type="term" value="P:tricarboxylic acid cycle"/>
    <property type="evidence" value="ECO:0007669"/>
    <property type="project" value="UniProtKB-KW"/>
</dbReference>
<dbReference type="CDD" id="cd06556">
    <property type="entry name" value="ICL_KPHMT"/>
    <property type="match status" value="1"/>
</dbReference>
<dbReference type="FunFam" id="3.20.20.60:FF:000005">
    <property type="entry name" value="Isocitrate lyase"/>
    <property type="match status" value="1"/>
</dbReference>
<dbReference type="Gene3D" id="3.20.20.60">
    <property type="entry name" value="Phosphoenolpyruvate-binding domains"/>
    <property type="match status" value="1"/>
</dbReference>
<dbReference type="InterPro" id="IPR006254">
    <property type="entry name" value="Isocitrate_lyase"/>
</dbReference>
<dbReference type="InterPro" id="IPR018523">
    <property type="entry name" value="Isocitrate_lyase_ph_CS"/>
</dbReference>
<dbReference type="InterPro" id="IPR015813">
    <property type="entry name" value="Pyrv/PenolPyrv_kinase-like_dom"/>
</dbReference>
<dbReference type="InterPro" id="IPR040442">
    <property type="entry name" value="Pyrv_kinase-like_dom_sf"/>
</dbReference>
<dbReference type="NCBIfam" id="TIGR01346">
    <property type="entry name" value="isocit_lyase"/>
    <property type="match status" value="2"/>
</dbReference>
<dbReference type="NCBIfam" id="NF011645">
    <property type="entry name" value="PRK15063.1"/>
    <property type="match status" value="1"/>
</dbReference>
<dbReference type="PANTHER" id="PTHR21631:SF3">
    <property type="entry name" value="BIFUNCTIONAL GLYOXYLATE CYCLE PROTEIN"/>
    <property type="match status" value="1"/>
</dbReference>
<dbReference type="PANTHER" id="PTHR21631">
    <property type="entry name" value="ISOCITRATE LYASE/MALATE SYNTHASE"/>
    <property type="match status" value="1"/>
</dbReference>
<dbReference type="Pfam" id="PF00463">
    <property type="entry name" value="ICL"/>
    <property type="match status" value="2"/>
</dbReference>
<dbReference type="PIRSF" id="PIRSF001362">
    <property type="entry name" value="Isocit_lyase"/>
    <property type="match status" value="1"/>
</dbReference>
<dbReference type="SUPFAM" id="SSF51621">
    <property type="entry name" value="Phosphoenolpyruvate/pyruvate domain"/>
    <property type="match status" value="1"/>
</dbReference>
<dbReference type="PROSITE" id="PS00161">
    <property type="entry name" value="ISOCITRATE_LYASE"/>
    <property type="match status" value="1"/>
</dbReference>
<accession>H8EVV4</accession>
<organism>
    <name type="scientific">Mycobacterium tuberculosis (strain ATCC 35801 / TMC 107 / Erdman)</name>
    <dbReference type="NCBI Taxonomy" id="652616"/>
    <lineage>
        <taxon>Bacteria</taxon>
        <taxon>Bacillati</taxon>
        <taxon>Actinomycetota</taxon>
        <taxon>Actinomycetes</taxon>
        <taxon>Mycobacteriales</taxon>
        <taxon>Mycobacteriaceae</taxon>
        <taxon>Mycobacterium</taxon>
        <taxon>Mycobacterium tuberculosis complex</taxon>
    </lineage>
</organism>
<feature type="chain" id="PRO_0000432564" description="Isocitrate lyase 1">
    <location>
        <begin position="1"/>
        <end position="428"/>
    </location>
</feature>
<feature type="active site" description="Proton acceptor" evidence="1">
    <location>
        <position position="191"/>
    </location>
</feature>
<feature type="binding site" evidence="1">
    <location>
        <begin position="91"/>
        <end position="93"/>
    </location>
    <ligand>
        <name>substrate</name>
    </ligand>
</feature>
<feature type="binding site" evidence="1">
    <location>
        <position position="153"/>
    </location>
    <ligand>
        <name>Mg(2+)</name>
        <dbReference type="ChEBI" id="CHEBI:18420"/>
    </ligand>
</feature>
<feature type="binding site" evidence="1">
    <location>
        <begin position="192"/>
        <end position="193"/>
    </location>
    <ligand>
        <name>substrate</name>
    </ligand>
</feature>
<feature type="binding site" evidence="1">
    <location>
        <position position="228"/>
    </location>
    <ligand>
        <name>substrate</name>
    </ligand>
</feature>
<feature type="binding site" evidence="1">
    <location>
        <begin position="313"/>
        <end position="317"/>
    </location>
    <ligand>
        <name>substrate</name>
    </ligand>
</feature>
<feature type="binding site" evidence="1">
    <location>
        <position position="347"/>
    </location>
    <ligand>
        <name>substrate</name>
    </ligand>
</feature>
<evidence type="ECO:0000250" key="1">
    <source>
        <dbReference type="UniProtKB" id="P9WKK7"/>
    </source>
</evidence>
<evidence type="ECO:0000269" key="2">
    <source>
    </source>
</evidence>
<evidence type="ECO:0000303" key="3">
    <source>
    </source>
</evidence>
<evidence type="ECO:0000305" key="4"/>
<evidence type="ECO:0000305" key="5">
    <source>
    </source>
</evidence>
<protein>
    <recommendedName>
        <fullName evidence="3">Isocitrate lyase 1</fullName>
        <shortName evidence="3">ICL1</shortName>
        <ecNumber evidence="2">4.1.3.1</ecNumber>
    </recommendedName>
    <alternativeName>
        <fullName evidence="3">Isocitrase</fullName>
    </alternativeName>
    <alternativeName>
        <fullName evidence="3">Isocitratase</fullName>
    </alternativeName>
    <alternativeName>
        <fullName evidence="3">Methylisocitrate lyase</fullName>
        <shortName evidence="3">MICA</shortName>
        <ecNumber evidence="2">4.1.3.30</ecNumber>
    </alternativeName>
</protein>
<reference key="1">
    <citation type="journal article" date="2012" name="J. Bacteriol.">
        <title>Complete annotated genome sequence of Mycobacterium tuberculosis Erdman.</title>
        <authorList>
            <person name="Miyoshi-Akiyama T."/>
            <person name="Matsumura K."/>
            <person name="Iwai H."/>
            <person name="Funatogawa K."/>
            <person name="Kirikae T."/>
        </authorList>
    </citation>
    <scope>NUCLEOTIDE SEQUENCE [LARGE SCALE GENOMIC DNA]</scope>
    <source>
        <strain>ATCC 35801 / TMC 107 / Erdman</strain>
    </source>
</reference>
<reference key="2">
    <citation type="submission" date="2014-04" db="EMBL/GenBank/DDBJ databases">
        <title>The genome sequence of Mycobacterium tuberculosis Erdman.</title>
        <authorList>
            <consortium name="The Broad Institute Genomics Platform"/>
            <consortium name="The Broad Institute Genome Sequencing Center for Infectious Disease"/>
            <person name="Earl A.M."/>
            <person name="Hung D."/>
            <person name="Gomez D."/>
            <person name="Hsueh P.R."/>
            <person name="Rozo J.C."/>
            <person name="Zambrano M.M."/>
            <person name="Desjardins C."/>
            <person name="Abeel T."/>
            <person name="Young S."/>
            <person name="Zeng Q."/>
            <person name="Gargeya S."/>
            <person name="Abouelleil A."/>
            <person name="Alvarado L."/>
            <person name="Chapman S.B."/>
            <person name="Gainer-Dewar J."/>
            <person name="Goldberg J."/>
            <person name="Griggs A."/>
            <person name="Gujja S."/>
            <person name="Hansen M."/>
            <person name="Howarth C."/>
            <person name="Imamovic A."/>
            <person name="Larimer J."/>
            <person name="Murphy C."/>
            <person name="Naylor J."/>
            <person name="Pearson M."/>
            <person name="Poon T.W."/>
            <person name="Priest M."/>
            <person name="Roberts A."/>
            <person name="Saif S."/>
            <person name="Shea T."/>
            <person name="Sykes S."/>
            <person name="Wortman J."/>
            <person name="Nusbaum C."/>
            <person name="Birren B."/>
        </authorList>
    </citation>
    <scope>NUCLEOTIDE SEQUENCE [LARGE SCALE GENOMIC DNA]</scope>
    <source>
        <strain>ATCC 35801 / TMC 107 / Erdman</strain>
    </source>
</reference>
<reference key="3">
    <citation type="journal article" date="2006" name="Mol. Microbiol.">
        <title>Role of the methylcitrate cycle in Mycobacterium tuberculosis metabolism, intracellular growth, and virulence.</title>
        <authorList>
            <person name="Munoz-Elias E.J."/>
            <person name="Upton A.M."/>
            <person name="Cherian J."/>
            <person name="McKinney J.D."/>
        </authorList>
    </citation>
    <scope>FUNCTION</scope>
    <scope>CATALYTIC ACTIVITY</scope>
    <scope>DISRUPTION PHENOTYPE</scope>
    <source>
        <strain>ATCC 35801 / TMC 107 / Erdman</strain>
    </source>
</reference>
<comment type="function">
    <text evidence="2">Involved in the persistence and virulence of M.tuberculosis. Catalyzes the reversible formation of succinate and glyoxylate from isocitrate, a key step of the glyoxylate cycle, which operates as an anaplerotic route for replenishing the tricarboxylic acid cycle during growth on fatty acid substrates. It also catalyzes the formation of pyruvate and succinate from 2-methylisocitrate, a key step in the methylcitrate cycle (propionate degradation route).</text>
</comment>
<comment type="catalytic activity">
    <reaction evidence="2">
        <text>D-threo-isocitrate = glyoxylate + succinate</text>
        <dbReference type="Rhea" id="RHEA:13245"/>
        <dbReference type="ChEBI" id="CHEBI:15562"/>
        <dbReference type="ChEBI" id="CHEBI:30031"/>
        <dbReference type="ChEBI" id="CHEBI:36655"/>
        <dbReference type="EC" id="4.1.3.1"/>
    </reaction>
</comment>
<comment type="catalytic activity">
    <reaction evidence="2">
        <text>(2S,3R)-3-hydroxybutane-1,2,3-tricarboxylate = pyruvate + succinate</text>
        <dbReference type="Rhea" id="RHEA:16809"/>
        <dbReference type="ChEBI" id="CHEBI:15361"/>
        <dbReference type="ChEBI" id="CHEBI:30031"/>
        <dbReference type="ChEBI" id="CHEBI:57429"/>
        <dbReference type="EC" id="4.1.3.30"/>
    </reaction>
</comment>
<comment type="cofactor">
    <cofactor evidence="1">
        <name>Mg(2+)</name>
        <dbReference type="ChEBI" id="CHEBI:18420"/>
    </cofactor>
</comment>
<comment type="pathway">
    <text evidence="5">Carbohydrate metabolism; glyoxylate cycle; (S)-malate from isocitrate: step 1/2.</text>
</comment>
<comment type="subunit">
    <text evidence="1">Homotetramer.</text>
</comment>
<comment type="disruption phenotype">
    <text evidence="2">Deletion of icl1 in cells growing on 0.1% propionate shows 10 and 8-fold decrease of isocitrate and methylisocitrate lyase activity, respectively.</text>
</comment>
<comment type="miscellaneous">
    <text evidence="2">Cell growing on 0.2% glucose show barely detectable isocitrate and methylisocitrate lyase activities. On 0.1% and 0.2% propionate, the lyase activities increase more than 10 and 100-fold, respectively.</text>
</comment>
<comment type="similarity">
    <text evidence="4">Belongs to the isocitrate lyase/PEP mutase superfamily. Isocitrate lyase family.</text>
</comment>
<gene>
    <name type="primary">icl1</name>
    <name type="ordered locus">ERDMAN_0512</name>
    <name type="ORF">Q643_00485</name>
</gene>
<proteinExistence type="evidence at protein level"/>